<accession>C1KWI4</accession>
<gene>
    <name evidence="1" type="primary">xpt</name>
    <name type="ordered locus">Lm4b_01901</name>
</gene>
<proteinExistence type="inferred from homology"/>
<organism>
    <name type="scientific">Listeria monocytogenes serotype 4b (strain CLIP80459)</name>
    <dbReference type="NCBI Taxonomy" id="568819"/>
    <lineage>
        <taxon>Bacteria</taxon>
        <taxon>Bacillati</taxon>
        <taxon>Bacillota</taxon>
        <taxon>Bacilli</taxon>
        <taxon>Bacillales</taxon>
        <taxon>Listeriaceae</taxon>
        <taxon>Listeria</taxon>
    </lineage>
</organism>
<dbReference type="EC" id="2.4.2.22" evidence="1"/>
<dbReference type="EMBL" id="FM242711">
    <property type="protein sequence ID" value="CAS05659.1"/>
    <property type="molecule type" value="Genomic_DNA"/>
</dbReference>
<dbReference type="RefSeq" id="WP_012681361.1">
    <property type="nucleotide sequence ID" value="NC_012488.1"/>
</dbReference>
<dbReference type="SMR" id="C1KWI4"/>
<dbReference type="KEGG" id="lmc:Lm4b_01901"/>
<dbReference type="HOGENOM" id="CLU_099015_0_0_9"/>
<dbReference type="UniPathway" id="UPA00602">
    <property type="reaction ID" value="UER00658"/>
</dbReference>
<dbReference type="GO" id="GO:0005737">
    <property type="term" value="C:cytoplasm"/>
    <property type="evidence" value="ECO:0007669"/>
    <property type="project" value="UniProtKB-SubCell"/>
</dbReference>
<dbReference type="GO" id="GO:0000310">
    <property type="term" value="F:xanthine phosphoribosyltransferase activity"/>
    <property type="evidence" value="ECO:0007669"/>
    <property type="project" value="UniProtKB-UniRule"/>
</dbReference>
<dbReference type="GO" id="GO:0006166">
    <property type="term" value="P:purine ribonucleoside salvage"/>
    <property type="evidence" value="ECO:0007669"/>
    <property type="project" value="UniProtKB-KW"/>
</dbReference>
<dbReference type="GO" id="GO:0046110">
    <property type="term" value="P:xanthine metabolic process"/>
    <property type="evidence" value="ECO:0007669"/>
    <property type="project" value="InterPro"/>
</dbReference>
<dbReference type="GO" id="GO:0032265">
    <property type="term" value="P:XMP salvage"/>
    <property type="evidence" value="ECO:0007669"/>
    <property type="project" value="UniProtKB-UniRule"/>
</dbReference>
<dbReference type="CDD" id="cd06223">
    <property type="entry name" value="PRTases_typeI"/>
    <property type="match status" value="1"/>
</dbReference>
<dbReference type="FunFam" id="3.40.50.2020:FF:000027">
    <property type="entry name" value="Xanthine phosphoribosyltransferase"/>
    <property type="match status" value="1"/>
</dbReference>
<dbReference type="Gene3D" id="3.40.50.2020">
    <property type="match status" value="1"/>
</dbReference>
<dbReference type="HAMAP" id="MF_01184">
    <property type="entry name" value="XPRTase"/>
    <property type="match status" value="1"/>
</dbReference>
<dbReference type="InterPro" id="IPR000836">
    <property type="entry name" value="PRibTrfase_dom"/>
</dbReference>
<dbReference type="InterPro" id="IPR029057">
    <property type="entry name" value="PRTase-like"/>
</dbReference>
<dbReference type="InterPro" id="IPR050118">
    <property type="entry name" value="Pur/Pyrimidine_PRTase"/>
</dbReference>
<dbReference type="InterPro" id="IPR010079">
    <property type="entry name" value="Xanthine_PRibTrfase"/>
</dbReference>
<dbReference type="NCBIfam" id="NF006671">
    <property type="entry name" value="PRK09219.1"/>
    <property type="match status" value="1"/>
</dbReference>
<dbReference type="NCBIfam" id="TIGR01744">
    <property type="entry name" value="XPRTase"/>
    <property type="match status" value="1"/>
</dbReference>
<dbReference type="PANTHER" id="PTHR43864">
    <property type="entry name" value="HYPOXANTHINE/GUANINE PHOSPHORIBOSYLTRANSFERASE"/>
    <property type="match status" value="1"/>
</dbReference>
<dbReference type="PANTHER" id="PTHR43864:SF1">
    <property type="entry name" value="XANTHINE PHOSPHORIBOSYLTRANSFERASE"/>
    <property type="match status" value="1"/>
</dbReference>
<dbReference type="Pfam" id="PF00156">
    <property type="entry name" value="Pribosyltran"/>
    <property type="match status" value="1"/>
</dbReference>
<dbReference type="SUPFAM" id="SSF53271">
    <property type="entry name" value="PRTase-like"/>
    <property type="match status" value="1"/>
</dbReference>
<feature type="chain" id="PRO_1000213769" description="Xanthine phosphoribosyltransferase">
    <location>
        <begin position="1"/>
        <end position="192"/>
    </location>
</feature>
<feature type="binding site" evidence="1">
    <location>
        <position position="20"/>
    </location>
    <ligand>
        <name>xanthine</name>
        <dbReference type="ChEBI" id="CHEBI:17712"/>
    </ligand>
</feature>
<feature type="binding site" evidence="1">
    <location>
        <position position="27"/>
    </location>
    <ligand>
        <name>xanthine</name>
        <dbReference type="ChEBI" id="CHEBI:17712"/>
    </ligand>
</feature>
<feature type="binding site" evidence="1">
    <location>
        <begin position="128"/>
        <end position="132"/>
    </location>
    <ligand>
        <name>5-phospho-alpha-D-ribose 1-diphosphate</name>
        <dbReference type="ChEBI" id="CHEBI:58017"/>
    </ligand>
</feature>
<feature type="binding site" evidence="1">
    <location>
        <position position="156"/>
    </location>
    <ligand>
        <name>xanthine</name>
        <dbReference type="ChEBI" id="CHEBI:17712"/>
    </ligand>
</feature>
<reference key="1">
    <citation type="journal article" date="2012" name="BMC Genomics">
        <title>Comparative genomics and transcriptomics of lineages I, II, and III strains of Listeria monocytogenes.</title>
        <authorList>
            <person name="Hain T."/>
            <person name="Ghai R."/>
            <person name="Billion A."/>
            <person name="Kuenne C.T."/>
            <person name="Steinweg C."/>
            <person name="Izar B."/>
            <person name="Mohamed W."/>
            <person name="Mraheil M."/>
            <person name="Domann E."/>
            <person name="Schaffrath S."/>
            <person name="Karst U."/>
            <person name="Goesmann A."/>
            <person name="Oehm S."/>
            <person name="Puhler A."/>
            <person name="Merkl R."/>
            <person name="Vorwerk S."/>
            <person name="Glaser P."/>
            <person name="Garrido P."/>
            <person name="Rusniok C."/>
            <person name="Buchrieser C."/>
            <person name="Goebel W."/>
            <person name="Chakraborty T."/>
        </authorList>
    </citation>
    <scope>NUCLEOTIDE SEQUENCE [LARGE SCALE GENOMIC DNA]</scope>
    <source>
        <strain>CLIP80459</strain>
    </source>
</reference>
<comment type="function">
    <text evidence="1">Converts the preformed base xanthine, a product of nucleic acid breakdown, to xanthosine 5'-monophosphate (XMP), so it can be reused for RNA or DNA synthesis.</text>
</comment>
<comment type="catalytic activity">
    <reaction evidence="1">
        <text>XMP + diphosphate = xanthine + 5-phospho-alpha-D-ribose 1-diphosphate</text>
        <dbReference type="Rhea" id="RHEA:10800"/>
        <dbReference type="ChEBI" id="CHEBI:17712"/>
        <dbReference type="ChEBI" id="CHEBI:33019"/>
        <dbReference type="ChEBI" id="CHEBI:57464"/>
        <dbReference type="ChEBI" id="CHEBI:58017"/>
        <dbReference type="EC" id="2.4.2.22"/>
    </reaction>
</comment>
<comment type="pathway">
    <text evidence="1">Purine metabolism; XMP biosynthesis via salvage pathway; XMP from xanthine: step 1/1.</text>
</comment>
<comment type="subunit">
    <text evidence="1">Homodimer.</text>
</comment>
<comment type="subcellular location">
    <subcellularLocation>
        <location evidence="1">Cytoplasm</location>
    </subcellularLocation>
</comment>
<comment type="similarity">
    <text evidence="1">Belongs to the purine/pyrimidine phosphoribosyltransferase family. Xpt subfamily.</text>
</comment>
<keyword id="KW-0963">Cytoplasm</keyword>
<keyword id="KW-0328">Glycosyltransferase</keyword>
<keyword id="KW-0660">Purine salvage</keyword>
<keyword id="KW-0808">Transferase</keyword>
<name>XPT_LISMC</name>
<sequence>MKLLEEFIQEKGTVLPGNVLKVDAFLNHQIDPVLMQAMGNEFAKRFQDLGITKIVTIESSGIAPAVFAGLALSVPVVFARKKKSVTLTDNLFTSTVYSYTKKESNDISVSKQFLTVDDTILVIDDFLANGQAALGLLEIAEHAGAKVAGIGIVIEKSFQQGRELLNKTGIPVYSLARIASLENEEILFLEEE</sequence>
<evidence type="ECO:0000255" key="1">
    <source>
        <dbReference type="HAMAP-Rule" id="MF_01184"/>
    </source>
</evidence>
<protein>
    <recommendedName>
        <fullName evidence="1">Xanthine phosphoribosyltransferase</fullName>
        <shortName evidence="1">XPRTase</shortName>
        <ecNumber evidence="1">2.4.2.22</ecNumber>
    </recommendedName>
</protein>